<organism>
    <name type="scientific">Sinorhizobium fredii (strain NBRC 101917 / NGR234)</name>
    <dbReference type="NCBI Taxonomy" id="394"/>
    <lineage>
        <taxon>Bacteria</taxon>
        <taxon>Pseudomonadati</taxon>
        <taxon>Pseudomonadota</taxon>
        <taxon>Alphaproteobacteria</taxon>
        <taxon>Hyphomicrobiales</taxon>
        <taxon>Rhizobiaceae</taxon>
        <taxon>Sinorhizobium/Ensifer group</taxon>
        <taxon>Sinorhizobium</taxon>
    </lineage>
</organism>
<keyword id="KW-0028">Amino-acid biosynthesis</keyword>
<keyword id="KW-0963">Cytoplasm</keyword>
<keyword id="KW-0368">Histidine biosynthesis</keyword>
<keyword id="KW-0456">Lyase</keyword>
<keyword id="KW-1185">Reference proteome</keyword>
<evidence type="ECO:0000255" key="1">
    <source>
        <dbReference type="HAMAP-Rule" id="MF_00076"/>
    </source>
</evidence>
<accession>C3MBC5</accession>
<gene>
    <name evidence="1" type="primary">hisB</name>
    <name type="ordered locus">NGR_c34040</name>
</gene>
<reference key="1">
    <citation type="journal article" date="2009" name="Appl. Environ. Microbiol.">
        <title>Rhizobium sp. strain NGR234 possesses a remarkable number of secretion systems.</title>
        <authorList>
            <person name="Schmeisser C."/>
            <person name="Liesegang H."/>
            <person name="Krysciak D."/>
            <person name="Bakkou N."/>
            <person name="Le Quere A."/>
            <person name="Wollherr A."/>
            <person name="Heinemeyer I."/>
            <person name="Morgenstern B."/>
            <person name="Pommerening-Roeser A."/>
            <person name="Flores M."/>
            <person name="Palacios R."/>
            <person name="Brenner S."/>
            <person name="Gottschalk G."/>
            <person name="Schmitz R.A."/>
            <person name="Broughton W.J."/>
            <person name="Perret X."/>
            <person name="Strittmatter A.W."/>
            <person name="Streit W.R."/>
        </authorList>
    </citation>
    <scope>NUCLEOTIDE SEQUENCE [LARGE SCALE GENOMIC DNA]</scope>
    <source>
        <strain>NBRC 101917 / NGR234</strain>
    </source>
</reference>
<comment type="catalytic activity">
    <reaction evidence="1">
        <text>D-erythro-1-(imidazol-4-yl)glycerol 3-phosphate = 3-(imidazol-4-yl)-2-oxopropyl phosphate + H2O</text>
        <dbReference type="Rhea" id="RHEA:11040"/>
        <dbReference type="ChEBI" id="CHEBI:15377"/>
        <dbReference type="ChEBI" id="CHEBI:57766"/>
        <dbReference type="ChEBI" id="CHEBI:58278"/>
        <dbReference type="EC" id="4.2.1.19"/>
    </reaction>
</comment>
<comment type="pathway">
    <text evidence="1">Amino-acid biosynthesis; L-histidine biosynthesis; L-histidine from 5-phospho-alpha-D-ribose 1-diphosphate: step 6/9.</text>
</comment>
<comment type="subcellular location">
    <subcellularLocation>
        <location evidence="1">Cytoplasm</location>
    </subcellularLocation>
</comment>
<comment type="similarity">
    <text evidence="1">Belongs to the imidazoleglycerol-phosphate dehydratase family.</text>
</comment>
<name>HIS7_SINFN</name>
<protein>
    <recommendedName>
        <fullName evidence="1">Imidazoleglycerol-phosphate dehydratase</fullName>
        <shortName evidence="1">IGPD</shortName>
        <ecNumber evidence="1">4.2.1.19</ecNumber>
    </recommendedName>
</protein>
<dbReference type="EC" id="4.2.1.19" evidence="1"/>
<dbReference type="EMBL" id="CP001389">
    <property type="protein sequence ID" value="ACP27134.1"/>
    <property type="molecule type" value="Genomic_DNA"/>
</dbReference>
<dbReference type="RefSeq" id="WP_012709881.1">
    <property type="nucleotide sequence ID" value="NC_012587.1"/>
</dbReference>
<dbReference type="RefSeq" id="YP_002827887.1">
    <property type="nucleotide sequence ID" value="NC_012587.1"/>
</dbReference>
<dbReference type="SMR" id="C3MBC5"/>
<dbReference type="STRING" id="394.NGR_c34040"/>
<dbReference type="KEGG" id="rhi:NGR_c34040"/>
<dbReference type="PATRIC" id="fig|394.7.peg.6253"/>
<dbReference type="eggNOG" id="COG0131">
    <property type="taxonomic scope" value="Bacteria"/>
</dbReference>
<dbReference type="HOGENOM" id="CLU_044308_3_0_5"/>
<dbReference type="OrthoDB" id="9813612at2"/>
<dbReference type="UniPathway" id="UPA00031">
    <property type="reaction ID" value="UER00011"/>
</dbReference>
<dbReference type="Proteomes" id="UP000001054">
    <property type="component" value="Chromosome"/>
</dbReference>
<dbReference type="GO" id="GO:0005737">
    <property type="term" value="C:cytoplasm"/>
    <property type="evidence" value="ECO:0007669"/>
    <property type="project" value="UniProtKB-SubCell"/>
</dbReference>
<dbReference type="GO" id="GO:0004424">
    <property type="term" value="F:imidazoleglycerol-phosphate dehydratase activity"/>
    <property type="evidence" value="ECO:0007669"/>
    <property type="project" value="UniProtKB-UniRule"/>
</dbReference>
<dbReference type="GO" id="GO:0000105">
    <property type="term" value="P:L-histidine biosynthetic process"/>
    <property type="evidence" value="ECO:0007669"/>
    <property type="project" value="UniProtKB-UniRule"/>
</dbReference>
<dbReference type="CDD" id="cd07914">
    <property type="entry name" value="IGPD"/>
    <property type="match status" value="1"/>
</dbReference>
<dbReference type="FunFam" id="3.30.230.40:FF:000001">
    <property type="entry name" value="Imidazoleglycerol-phosphate dehydratase HisB"/>
    <property type="match status" value="1"/>
</dbReference>
<dbReference type="FunFam" id="3.30.230.40:FF:000003">
    <property type="entry name" value="Imidazoleglycerol-phosphate dehydratase HisB"/>
    <property type="match status" value="1"/>
</dbReference>
<dbReference type="Gene3D" id="3.30.230.40">
    <property type="entry name" value="Imidazole glycerol phosphate dehydratase, domain 1"/>
    <property type="match status" value="2"/>
</dbReference>
<dbReference type="HAMAP" id="MF_00076">
    <property type="entry name" value="HisB"/>
    <property type="match status" value="1"/>
</dbReference>
<dbReference type="InterPro" id="IPR038494">
    <property type="entry name" value="IGPD_sf"/>
</dbReference>
<dbReference type="InterPro" id="IPR000807">
    <property type="entry name" value="ImidazoleglycerolP_deHydtase"/>
</dbReference>
<dbReference type="InterPro" id="IPR020565">
    <property type="entry name" value="ImidazoleglycerP_deHydtase_CS"/>
</dbReference>
<dbReference type="InterPro" id="IPR020568">
    <property type="entry name" value="Ribosomal_Su5_D2-typ_SF"/>
</dbReference>
<dbReference type="NCBIfam" id="NF002109">
    <property type="entry name" value="PRK00951.1-5"/>
    <property type="match status" value="1"/>
</dbReference>
<dbReference type="NCBIfam" id="NF002111">
    <property type="entry name" value="PRK00951.2-1"/>
    <property type="match status" value="1"/>
</dbReference>
<dbReference type="NCBIfam" id="NF002114">
    <property type="entry name" value="PRK00951.2-4"/>
    <property type="match status" value="1"/>
</dbReference>
<dbReference type="PANTHER" id="PTHR23133:SF2">
    <property type="entry name" value="IMIDAZOLEGLYCEROL-PHOSPHATE DEHYDRATASE"/>
    <property type="match status" value="1"/>
</dbReference>
<dbReference type="PANTHER" id="PTHR23133">
    <property type="entry name" value="IMIDAZOLEGLYCEROL-PHOSPHATE DEHYDRATASE HIS7"/>
    <property type="match status" value="1"/>
</dbReference>
<dbReference type="Pfam" id="PF00475">
    <property type="entry name" value="IGPD"/>
    <property type="match status" value="1"/>
</dbReference>
<dbReference type="SUPFAM" id="SSF54211">
    <property type="entry name" value="Ribosomal protein S5 domain 2-like"/>
    <property type="match status" value="2"/>
</dbReference>
<dbReference type="PROSITE" id="PS00954">
    <property type="entry name" value="IGP_DEHYDRATASE_1"/>
    <property type="match status" value="1"/>
</dbReference>
<dbReference type="PROSITE" id="PS00955">
    <property type="entry name" value="IGP_DEHYDRATASE_2"/>
    <property type="match status" value="1"/>
</dbReference>
<feature type="chain" id="PRO_1000190622" description="Imidazoleglycerol-phosphate dehydratase">
    <location>
        <begin position="1"/>
        <end position="202"/>
    </location>
</feature>
<sequence length="202" mass="21887">MADVTLSRTGQVSRKTNETAVSVSVNIDGTGVSKIATGVGFFDHMLDQLARHSLIDMEIKTEGDLHVDDHHTVEDTGIAIGQAIAKALGDRRGITRYASLDLAMDETMTRAAVDVSGRPFLVWNVTFSSPKIGTFDTELVREFFQALAQHAGITLHVQNIYGANNHHVAETCFKSVARVLRTATEIDPRQAGRVPSTKGTLA</sequence>
<proteinExistence type="inferred from homology"/>